<evidence type="ECO:0000255" key="1">
    <source>
        <dbReference type="HAMAP-Rule" id="MF_00580"/>
    </source>
</evidence>
<evidence type="ECO:0000269" key="2">
    <source>
    </source>
</evidence>
<evidence type="ECO:0000269" key="3">
    <source>
    </source>
</evidence>
<evidence type="ECO:0000305" key="4"/>
<keyword id="KW-0143">Chaperone</keyword>
<keyword id="KW-0963">Cytoplasm</keyword>
<keyword id="KW-0903">Direct protein sequencing</keyword>
<keyword id="KW-1185">Reference proteome</keyword>
<keyword id="KW-0346">Stress response</keyword>
<sequence length="100" mass="10804">MAKVNIKPLEDKILVQANEAETTTASGLVIPDTAKEKPQEGTVVAVGPGRWDEDGEKRIPLDVAEGDTVIYSKYGGTEIKYNGEEYLILSARDVLAVVSK</sequence>
<organism>
    <name type="scientific">Mycobacterium bovis (strain ATCC BAA-935 / AF2122/97)</name>
    <dbReference type="NCBI Taxonomy" id="233413"/>
    <lineage>
        <taxon>Bacteria</taxon>
        <taxon>Bacillati</taxon>
        <taxon>Actinomycetota</taxon>
        <taxon>Actinomycetes</taxon>
        <taxon>Mycobacteriales</taxon>
        <taxon>Mycobacteriaceae</taxon>
        <taxon>Mycobacterium</taxon>
        <taxon>Mycobacterium tuberculosis complex</taxon>
    </lineage>
</organism>
<reference key="1">
    <citation type="journal article" date="1988" name="FEBS Lett.">
        <title>Immunogenic protein MPB57 from Mycobacterium bovis BCG: molecular cloning, nucleotide sequence and expression.</title>
        <authorList>
            <person name="Yamaguchi R."/>
            <person name="Matsuo K."/>
            <person name="Yamazaki A."/>
            <person name="Nagai S."/>
            <person name="Terasaka K."/>
            <person name="Yamada T."/>
        </authorList>
    </citation>
    <scope>NUCLEOTIDE SEQUENCE [GENOMIC DNA]</scope>
    <scope>PROTEIN SEQUENCE OF 2-21</scope>
    <source>
        <strain>BCG</strain>
    </source>
</reference>
<reference key="2">
    <citation type="journal article" date="2003" name="Proc. Natl. Acad. Sci. U.S.A.">
        <title>The complete genome sequence of Mycobacterium bovis.</title>
        <authorList>
            <person name="Garnier T."/>
            <person name="Eiglmeier K."/>
            <person name="Camus J.-C."/>
            <person name="Medina N."/>
            <person name="Mansoor H."/>
            <person name="Pryor M."/>
            <person name="Duthoy S."/>
            <person name="Grondin S."/>
            <person name="Lacroix C."/>
            <person name="Monsempe C."/>
            <person name="Simon S."/>
            <person name="Harris B."/>
            <person name="Atkin R."/>
            <person name="Doggett J."/>
            <person name="Mayes R."/>
            <person name="Keating L."/>
            <person name="Wheeler P.R."/>
            <person name="Parkhill J."/>
            <person name="Barrell B.G."/>
            <person name="Cole S.T."/>
            <person name="Gordon S.V."/>
            <person name="Hewinson R.G."/>
        </authorList>
    </citation>
    <scope>NUCLEOTIDE SEQUENCE [LARGE SCALE GENOMIC DNA]</scope>
    <source>
        <strain>ATCC BAA-935 / AF2122/97</strain>
    </source>
</reference>
<reference key="3">
    <citation type="journal article" date="2017" name="Genome Announc.">
        <title>Updated reference genome sequence and annotation of Mycobacterium bovis AF2122/97.</title>
        <authorList>
            <person name="Malone K.M."/>
            <person name="Farrell D."/>
            <person name="Stuber T.P."/>
            <person name="Schubert O.T."/>
            <person name="Aebersold R."/>
            <person name="Robbe-Austerman S."/>
            <person name="Gordon S.V."/>
        </authorList>
    </citation>
    <scope>NUCLEOTIDE SEQUENCE [LARGE SCALE GENOMIC DNA]</scope>
    <scope>GENOME REANNOTATION</scope>
    <source>
        <strain>ATCC BAA-935 / AF2122/97</strain>
    </source>
</reference>
<reference key="4">
    <citation type="journal article" date="1991" name="Infect. Immun.">
        <title>Purification and characterization of major antigens from a Mycobacterium bovis culture filtrate.</title>
        <authorList>
            <person name="Fifis T."/>
            <person name="Costopoulos C."/>
            <person name="Radford A.J."/>
            <person name="Bacic A."/>
            <person name="Wood P.R."/>
        </authorList>
    </citation>
    <scope>PROTEIN SEQUENCE OF 2-20</scope>
    <source>
        <strain>AN-5</strain>
    </source>
</reference>
<accession>P15020</accession>
<accession>A0A1R3Y454</accession>
<accession>X2BNN5</accession>
<protein>
    <recommendedName>
        <fullName evidence="1">Co-chaperonin GroES</fullName>
    </recommendedName>
    <alternativeName>
        <fullName evidence="1">10 kDa chaperonin</fullName>
    </alternativeName>
    <alternativeName>
        <fullName evidence="1">Chaperonin-10</fullName>
        <shortName evidence="1">Cpn10</shortName>
    </alternativeName>
    <alternativeName>
        <fullName>Immunogenic protein MPB57</fullName>
    </alternativeName>
</protein>
<dbReference type="EMBL" id="X13970">
    <property type="protein sequence ID" value="CAA32149.1"/>
    <property type="molecule type" value="Genomic_DNA"/>
</dbReference>
<dbReference type="EMBL" id="M35389">
    <property type="protein sequence ID" value="AAA25365.1"/>
    <property type="molecule type" value="Genomic_DNA"/>
</dbReference>
<dbReference type="EMBL" id="LT708304">
    <property type="protein sequence ID" value="SIU02080.1"/>
    <property type="molecule type" value="Genomic_DNA"/>
</dbReference>
<dbReference type="PIR" id="S01784">
    <property type="entry name" value="BVMY7B"/>
</dbReference>
<dbReference type="RefSeq" id="NP_857092.1">
    <property type="nucleotide sequence ID" value="NC_002945.3"/>
</dbReference>
<dbReference type="RefSeq" id="WP_003418028.1">
    <property type="nucleotide sequence ID" value="NC_002945.4"/>
</dbReference>
<dbReference type="SMR" id="P15020"/>
<dbReference type="GeneID" id="66599586"/>
<dbReference type="KEGG" id="mbo:BQ2027_MB3452C"/>
<dbReference type="PATRIC" id="fig|233413.5.peg.3787"/>
<dbReference type="Proteomes" id="UP000001419">
    <property type="component" value="Chromosome"/>
</dbReference>
<dbReference type="GO" id="GO:0005737">
    <property type="term" value="C:cytoplasm"/>
    <property type="evidence" value="ECO:0007669"/>
    <property type="project" value="UniProtKB-SubCell"/>
</dbReference>
<dbReference type="GO" id="GO:0005524">
    <property type="term" value="F:ATP binding"/>
    <property type="evidence" value="ECO:0007669"/>
    <property type="project" value="InterPro"/>
</dbReference>
<dbReference type="GO" id="GO:0046872">
    <property type="term" value="F:metal ion binding"/>
    <property type="evidence" value="ECO:0007669"/>
    <property type="project" value="TreeGrafter"/>
</dbReference>
<dbReference type="GO" id="GO:0044183">
    <property type="term" value="F:protein folding chaperone"/>
    <property type="evidence" value="ECO:0007669"/>
    <property type="project" value="InterPro"/>
</dbReference>
<dbReference type="GO" id="GO:0051087">
    <property type="term" value="F:protein-folding chaperone binding"/>
    <property type="evidence" value="ECO:0007669"/>
    <property type="project" value="TreeGrafter"/>
</dbReference>
<dbReference type="GO" id="GO:0051082">
    <property type="term" value="F:unfolded protein binding"/>
    <property type="evidence" value="ECO:0007669"/>
    <property type="project" value="TreeGrafter"/>
</dbReference>
<dbReference type="GO" id="GO:0051085">
    <property type="term" value="P:chaperone cofactor-dependent protein refolding"/>
    <property type="evidence" value="ECO:0007669"/>
    <property type="project" value="TreeGrafter"/>
</dbReference>
<dbReference type="CDD" id="cd00320">
    <property type="entry name" value="cpn10"/>
    <property type="match status" value="1"/>
</dbReference>
<dbReference type="FunFam" id="2.30.33.40:FF:000001">
    <property type="entry name" value="10 kDa chaperonin"/>
    <property type="match status" value="1"/>
</dbReference>
<dbReference type="Gene3D" id="2.30.33.40">
    <property type="entry name" value="GroES chaperonin"/>
    <property type="match status" value="1"/>
</dbReference>
<dbReference type="HAMAP" id="MF_00580">
    <property type="entry name" value="CH10"/>
    <property type="match status" value="1"/>
</dbReference>
<dbReference type="InterPro" id="IPR020818">
    <property type="entry name" value="Chaperonin_GroES"/>
</dbReference>
<dbReference type="InterPro" id="IPR037124">
    <property type="entry name" value="Chaperonin_GroES_sf"/>
</dbReference>
<dbReference type="InterPro" id="IPR018369">
    <property type="entry name" value="Chaprnonin_Cpn10_CS"/>
</dbReference>
<dbReference type="InterPro" id="IPR011032">
    <property type="entry name" value="GroES-like_sf"/>
</dbReference>
<dbReference type="NCBIfam" id="NF001530">
    <property type="entry name" value="PRK00364.1-6"/>
    <property type="match status" value="1"/>
</dbReference>
<dbReference type="NCBIfam" id="NF001531">
    <property type="entry name" value="PRK00364.2-2"/>
    <property type="match status" value="1"/>
</dbReference>
<dbReference type="NCBIfam" id="NF001533">
    <property type="entry name" value="PRK00364.2-4"/>
    <property type="match status" value="1"/>
</dbReference>
<dbReference type="NCBIfam" id="NF001534">
    <property type="entry name" value="PRK00364.2-5"/>
    <property type="match status" value="1"/>
</dbReference>
<dbReference type="PANTHER" id="PTHR10772">
    <property type="entry name" value="10 KDA HEAT SHOCK PROTEIN"/>
    <property type="match status" value="1"/>
</dbReference>
<dbReference type="PANTHER" id="PTHR10772:SF58">
    <property type="entry name" value="CO-CHAPERONIN GROES"/>
    <property type="match status" value="1"/>
</dbReference>
<dbReference type="Pfam" id="PF00166">
    <property type="entry name" value="Cpn10"/>
    <property type="match status" value="1"/>
</dbReference>
<dbReference type="PRINTS" id="PR00297">
    <property type="entry name" value="CHAPERONIN10"/>
</dbReference>
<dbReference type="SMART" id="SM00883">
    <property type="entry name" value="Cpn10"/>
    <property type="match status" value="1"/>
</dbReference>
<dbReference type="SUPFAM" id="SSF50129">
    <property type="entry name" value="GroES-like"/>
    <property type="match status" value="1"/>
</dbReference>
<dbReference type="PROSITE" id="PS00681">
    <property type="entry name" value="CHAPERONINS_CPN10"/>
    <property type="match status" value="1"/>
</dbReference>
<gene>
    <name evidence="1" type="primary">groES</name>
    <name evidence="1" type="synonym">groS</name>
    <name type="synonym">mopB</name>
    <name type="ordered locus">BQ2027_MB3452C</name>
</gene>
<proteinExistence type="evidence at protein level"/>
<name>CH10_MYCBO</name>
<feature type="initiator methionine" description="Removed" evidence="2 3">
    <location>
        <position position="1"/>
    </location>
</feature>
<feature type="chain" id="PRO_0000174785" description="Co-chaperonin GroES">
    <location>
        <begin position="2"/>
        <end position="100"/>
    </location>
</feature>
<feature type="sequence conflict" description="In Ref. 4; AA sequence." evidence="4" ref="4">
    <original>Q</original>
    <variation>E</variation>
    <location>
        <position position="16"/>
    </location>
</feature>
<feature type="sequence conflict" description="In Ref. 1; CAA32149." evidence="4" ref="1">
    <original>LAVVS</original>
    <variation>VGRRF</variation>
    <location>
        <begin position="95"/>
        <end position="99"/>
    </location>
</feature>
<comment type="function">
    <text evidence="1">Together with the chaperonin GroEL, plays an essential role in assisting protein folding. The GroEL-GroES system forms a nano-cage that allows encapsulation of the non-native substrate proteins and provides a physical environment optimized to promote and accelerate protein folding. GroES binds to the apical surface of the GroEL ring, thereby capping the opening of the GroEL channel.</text>
</comment>
<comment type="subunit">
    <text evidence="1">Heptamer of 7 subunits arranged in a ring. Interacts with the chaperonin GroEL.</text>
</comment>
<comment type="subcellular location">
    <subcellularLocation>
        <location evidence="1">Cytoplasm</location>
    </subcellularLocation>
</comment>
<comment type="similarity">
    <text evidence="1 4">Belongs to the GroES chaperonin family.</text>
</comment>